<protein>
    <recommendedName>
        <fullName evidence="1">2,3,4,5-tetrahydropyridine-2,6-dicarboxylate N-succinyltransferase</fullName>
        <ecNumber evidence="1">2.3.1.117</ecNumber>
    </recommendedName>
    <alternativeName>
        <fullName evidence="1">Tetrahydrodipicolinate N-succinyltransferase</fullName>
        <shortName evidence="1">THDP succinyltransferase</shortName>
        <shortName evidence="1">THP succinyltransferase</shortName>
        <shortName evidence="1">Tetrahydropicolinate succinylase</shortName>
    </alternativeName>
</protein>
<reference key="1">
    <citation type="submission" date="2007-03" db="EMBL/GenBank/DDBJ databases">
        <title>Complete sequence of chromosome 1 of Burkholderia vietnamiensis G4.</title>
        <authorList>
            <consortium name="US DOE Joint Genome Institute"/>
            <person name="Copeland A."/>
            <person name="Lucas S."/>
            <person name="Lapidus A."/>
            <person name="Barry K."/>
            <person name="Detter J.C."/>
            <person name="Glavina del Rio T."/>
            <person name="Hammon N."/>
            <person name="Israni S."/>
            <person name="Dalin E."/>
            <person name="Tice H."/>
            <person name="Pitluck S."/>
            <person name="Chain P."/>
            <person name="Malfatti S."/>
            <person name="Shin M."/>
            <person name="Vergez L."/>
            <person name="Schmutz J."/>
            <person name="Larimer F."/>
            <person name="Land M."/>
            <person name="Hauser L."/>
            <person name="Kyrpides N."/>
            <person name="Tiedje J."/>
            <person name="Richardson P."/>
        </authorList>
    </citation>
    <scope>NUCLEOTIDE SEQUENCE [LARGE SCALE GENOMIC DNA]</scope>
    <source>
        <strain>G4 / LMG 22486</strain>
    </source>
</reference>
<accession>A4JF86</accession>
<comment type="catalytic activity">
    <reaction evidence="1">
        <text>(S)-2,3,4,5-tetrahydrodipicolinate + succinyl-CoA + H2O = (S)-2-succinylamino-6-oxoheptanedioate + CoA</text>
        <dbReference type="Rhea" id="RHEA:17325"/>
        <dbReference type="ChEBI" id="CHEBI:15377"/>
        <dbReference type="ChEBI" id="CHEBI:15685"/>
        <dbReference type="ChEBI" id="CHEBI:16845"/>
        <dbReference type="ChEBI" id="CHEBI:57287"/>
        <dbReference type="ChEBI" id="CHEBI:57292"/>
        <dbReference type="EC" id="2.3.1.117"/>
    </reaction>
</comment>
<comment type="pathway">
    <text evidence="1">Amino-acid biosynthesis; L-lysine biosynthesis via DAP pathway; LL-2,6-diaminopimelate from (S)-tetrahydrodipicolinate (succinylase route): step 1/3.</text>
</comment>
<comment type="subunit">
    <text evidence="1">Homotrimer.</text>
</comment>
<comment type="subcellular location">
    <subcellularLocation>
        <location evidence="1">Cytoplasm</location>
    </subcellularLocation>
</comment>
<comment type="similarity">
    <text evidence="1">Belongs to the transferase hexapeptide repeat family.</text>
</comment>
<organism>
    <name type="scientific">Burkholderia vietnamiensis (strain G4 / LMG 22486)</name>
    <name type="common">Burkholderia cepacia (strain R1808)</name>
    <dbReference type="NCBI Taxonomy" id="269482"/>
    <lineage>
        <taxon>Bacteria</taxon>
        <taxon>Pseudomonadati</taxon>
        <taxon>Pseudomonadota</taxon>
        <taxon>Betaproteobacteria</taxon>
        <taxon>Burkholderiales</taxon>
        <taxon>Burkholderiaceae</taxon>
        <taxon>Burkholderia</taxon>
        <taxon>Burkholderia cepacia complex</taxon>
    </lineage>
</organism>
<dbReference type="EC" id="2.3.1.117" evidence="1"/>
<dbReference type="EMBL" id="CP000614">
    <property type="protein sequence ID" value="ABO54939.1"/>
    <property type="molecule type" value="Genomic_DNA"/>
</dbReference>
<dbReference type="SMR" id="A4JF86"/>
<dbReference type="KEGG" id="bvi:Bcep1808_1936"/>
<dbReference type="eggNOG" id="COG2171">
    <property type="taxonomic scope" value="Bacteria"/>
</dbReference>
<dbReference type="HOGENOM" id="CLU_050859_0_1_4"/>
<dbReference type="UniPathway" id="UPA00034">
    <property type="reaction ID" value="UER00019"/>
</dbReference>
<dbReference type="Proteomes" id="UP000002287">
    <property type="component" value="Chromosome 1"/>
</dbReference>
<dbReference type="GO" id="GO:0005737">
    <property type="term" value="C:cytoplasm"/>
    <property type="evidence" value="ECO:0007669"/>
    <property type="project" value="UniProtKB-SubCell"/>
</dbReference>
<dbReference type="GO" id="GO:0008666">
    <property type="term" value="F:2,3,4,5-tetrahydropyridine-2,6-dicarboxylate N-succinyltransferase activity"/>
    <property type="evidence" value="ECO:0007669"/>
    <property type="project" value="UniProtKB-UniRule"/>
</dbReference>
<dbReference type="GO" id="GO:0016779">
    <property type="term" value="F:nucleotidyltransferase activity"/>
    <property type="evidence" value="ECO:0007669"/>
    <property type="project" value="TreeGrafter"/>
</dbReference>
<dbReference type="GO" id="GO:0019877">
    <property type="term" value="P:diaminopimelate biosynthetic process"/>
    <property type="evidence" value="ECO:0007669"/>
    <property type="project" value="UniProtKB-UniRule"/>
</dbReference>
<dbReference type="GO" id="GO:0009089">
    <property type="term" value="P:lysine biosynthetic process via diaminopimelate"/>
    <property type="evidence" value="ECO:0007669"/>
    <property type="project" value="UniProtKB-UniRule"/>
</dbReference>
<dbReference type="CDD" id="cd03350">
    <property type="entry name" value="LbH_THP_succinylT"/>
    <property type="match status" value="1"/>
</dbReference>
<dbReference type="Gene3D" id="2.160.10.10">
    <property type="entry name" value="Hexapeptide repeat proteins"/>
    <property type="match status" value="1"/>
</dbReference>
<dbReference type="Gene3D" id="1.10.166.10">
    <property type="entry name" value="Tetrahydrodipicolinate-N-succinyltransferase, N-terminal domain"/>
    <property type="match status" value="1"/>
</dbReference>
<dbReference type="HAMAP" id="MF_00811">
    <property type="entry name" value="DapD"/>
    <property type="match status" value="1"/>
</dbReference>
<dbReference type="InterPro" id="IPR005664">
    <property type="entry name" value="DapD_Trfase_Hexpep_rpt_fam"/>
</dbReference>
<dbReference type="InterPro" id="IPR001451">
    <property type="entry name" value="Hexapep"/>
</dbReference>
<dbReference type="InterPro" id="IPR018357">
    <property type="entry name" value="Hexapep_transf_CS"/>
</dbReference>
<dbReference type="InterPro" id="IPR023180">
    <property type="entry name" value="THP_succinylTrfase_dom1"/>
</dbReference>
<dbReference type="InterPro" id="IPR037133">
    <property type="entry name" value="THP_succinylTrfase_N_sf"/>
</dbReference>
<dbReference type="InterPro" id="IPR011004">
    <property type="entry name" value="Trimer_LpxA-like_sf"/>
</dbReference>
<dbReference type="NCBIfam" id="TIGR00965">
    <property type="entry name" value="dapD"/>
    <property type="match status" value="1"/>
</dbReference>
<dbReference type="NCBIfam" id="NF008808">
    <property type="entry name" value="PRK11830.1"/>
    <property type="match status" value="1"/>
</dbReference>
<dbReference type="PANTHER" id="PTHR19136:SF52">
    <property type="entry name" value="2,3,4,5-TETRAHYDROPYRIDINE-2,6-DICARBOXYLATE N-SUCCINYLTRANSFERASE"/>
    <property type="match status" value="1"/>
</dbReference>
<dbReference type="PANTHER" id="PTHR19136">
    <property type="entry name" value="MOLYBDENUM COFACTOR GUANYLYLTRANSFERASE"/>
    <property type="match status" value="1"/>
</dbReference>
<dbReference type="Pfam" id="PF14602">
    <property type="entry name" value="Hexapep_2"/>
    <property type="match status" value="1"/>
</dbReference>
<dbReference type="Pfam" id="PF14805">
    <property type="entry name" value="THDPS_N_2"/>
    <property type="match status" value="1"/>
</dbReference>
<dbReference type="SUPFAM" id="SSF51161">
    <property type="entry name" value="Trimeric LpxA-like enzymes"/>
    <property type="match status" value="1"/>
</dbReference>
<dbReference type="PROSITE" id="PS00101">
    <property type="entry name" value="HEXAPEP_TRANSFERASES"/>
    <property type="match status" value="1"/>
</dbReference>
<gene>
    <name evidence="1" type="primary">dapD</name>
    <name type="ordered locus">Bcep1808_1936</name>
</gene>
<name>DAPD_BURVG</name>
<sequence length="275" mass="29480">MSQQLQQIIDTAWENRAELSPKAAPADVREAVAHAIEQLDKGALRVAEKIDGNWTVHQWLKKAVLLSFRLEDNAPMPAGGYSQFYDKVPSKFANYTAEDFAAGGFRVVPPAIARRGSFIAKNVVLMPSYTNIGAYVDEGTMVDTWATVGSCAQIGKNVHLSGGVGIGGVLEPLQANPVIIEDNCFIGARSEVVEGVIVEENSVISMGVYLGQSTKIYDRETGEVSYGRIPAGSVVVAGNLPSKDGSHSLYCAVIVKKVDAKTRAKVGLNELLRGD</sequence>
<keyword id="KW-0012">Acyltransferase</keyword>
<keyword id="KW-0028">Amino-acid biosynthesis</keyword>
<keyword id="KW-0963">Cytoplasm</keyword>
<keyword id="KW-0220">Diaminopimelate biosynthesis</keyword>
<keyword id="KW-0457">Lysine biosynthesis</keyword>
<keyword id="KW-0677">Repeat</keyword>
<keyword id="KW-0808">Transferase</keyword>
<proteinExistence type="inferred from homology"/>
<evidence type="ECO:0000255" key="1">
    <source>
        <dbReference type="HAMAP-Rule" id="MF_00811"/>
    </source>
</evidence>
<feature type="chain" id="PRO_1000047133" description="2,3,4,5-tetrahydropyridine-2,6-dicarboxylate N-succinyltransferase">
    <location>
        <begin position="1"/>
        <end position="275"/>
    </location>
</feature>
<feature type="binding site" evidence="1">
    <location>
        <position position="106"/>
    </location>
    <ligand>
        <name>substrate</name>
    </ligand>
</feature>
<feature type="binding site" evidence="1">
    <location>
        <position position="143"/>
    </location>
    <ligand>
        <name>substrate</name>
    </ligand>
</feature>